<organism>
    <name type="scientific">Streptococcus mutans serotype c (strain ATCC 700610 / UA159)</name>
    <dbReference type="NCBI Taxonomy" id="210007"/>
    <lineage>
        <taxon>Bacteria</taxon>
        <taxon>Bacillati</taxon>
        <taxon>Bacillota</taxon>
        <taxon>Bacilli</taxon>
        <taxon>Lactobacillales</taxon>
        <taxon>Streptococcaceae</taxon>
        <taxon>Streptococcus</taxon>
    </lineage>
</organism>
<dbReference type="EC" id="2.6.1.11" evidence="1"/>
<dbReference type="EMBL" id="AE014133">
    <property type="protein sequence ID" value="AAN58400.1"/>
    <property type="molecule type" value="Genomic_DNA"/>
</dbReference>
<dbReference type="EMBL" id="U48887">
    <property type="protein sequence ID" value="AAC44504.1"/>
    <property type="molecule type" value="Genomic_DNA"/>
</dbReference>
<dbReference type="RefSeq" id="NP_721094.1">
    <property type="nucleotide sequence ID" value="NC_004350.2"/>
</dbReference>
<dbReference type="RefSeq" id="WP_002261875.1">
    <property type="nucleotide sequence ID" value="NC_004350.2"/>
</dbReference>
<dbReference type="SMR" id="Q59928"/>
<dbReference type="STRING" id="210007.SMU_666"/>
<dbReference type="KEGG" id="smu:SMU_666"/>
<dbReference type="PATRIC" id="fig|210007.7.peg.591"/>
<dbReference type="eggNOG" id="COG4992">
    <property type="taxonomic scope" value="Bacteria"/>
</dbReference>
<dbReference type="HOGENOM" id="CLU_016922_10_1_9"/>
<dbReference type="OrthoDB" id="9807885at2"/>
<dbReference type="PhylomeDB" id="Q59928"/>
<dbReference type="UniPathway" id="UPA00068">
    <property type="reaction ID" value="UER00109"/>
</dbReference>
<dbReference type="Proteomes" id="UP000002512">
    <property type="component" value="Chromosome"/>
</dbReference>
<dbReference type="GO" id="GO:0005737">
    <property type="term" value="C:cytoplasm"/>
    <property type="evidence" value="ECO:0007669"/>
    <property type="project" value="UniProtKB-SubCell"/>
</dbReference>
<dbReference type="GO" id="GO:0042802">
    <property type="term" value="F:identical protein binding"/>
    <property type="evidence" value="ECO:0007669"/>
    <property type="project" value="TreeGrafter"/>
</dbReference>
<dbReference type="GO" id="GO:0003992">
    <property type="term" value="F:N2-acetyl-L-ornithine:2-oxoglutarate 5-aminotransferase activity"/>
    <property type="evidence" value="ECO:0007669"/>
    <property type="project" value="UniProtKB-UniRule"/>
</dbReference>
<dbReference type="GO" id="GO:0030170">
    <property type="term" value="F:pyridoxal phosphate binding"/>
    <property type="evidence" value="ECO:0007669"/>
    <property type="project" value="InterPro"/>
</dbReference>
<dbReference type="GO" id="GO:0006526">
    <property type="term" value="P:L-arginine biosynthetic process"/>
    <property type="evidence" value="ECO:0007669"/>
    <property type="project" value="UniProtKB-UniRule"/>
</dbReference>
<dbReference type="CDD" id="cd00610">
    <property type="entry name" value="OAT_like"/>
    <property type="match status" value="1"/>
</dbReference>
<dbReference type="FunFam" id="3.40.640.10:FF:000004">
    <property type="entry name" value="Acetylornithine aminotransferase"/>
    <property type="match status" value="1"/>
</dbReference>
<dbReference type="Gene3D" id="3.90.1150.10">
    <property type="entry name" value="Aspartate Aminotransferase, domain 1"/>
    <property type="match status" value="1"/>
</dbReference>
<dbReference type="Gene3D" id="3.40.640.10">
    <property type="entry name" value="Type I PLP-dependent aspartate aminotransferase-like (Major domain)"/>
    <property type="match status" value="1"/>
</dbReference>
<dbReference type="HAMAP" id="MF_01107">
    <property type="entry name" value="ArgD_aminotrans_3"/>
    <property type="match status" value="1"/>
</dbReference>
<dbReference type="InterPro" id="IPR004636">
    <property type="entry name" value="AcOrn/SuccOrn_fam"/>
</dbReference>
<dbReference type="InterPro" id="IPR005814">
    <property type="entry name" value="Aminotrans_3"/>
</dbReference>
<dbReference type="InterPro" id="IPR049704">
    <property type="entry name" value="Aminotrans_3_PPA_site"/>
</dbReference>
<dbReference type="InterPro" id="IPR050103">
    <property type="entry name" value="Class-III_PLP-dep_AT"/>
</dbReference>
<dbReference type="InterPro" id="IPR015424">
    <property type="entry name" value="PyrdxlP-dep_Trfase"/>
</dbReference>
<dbReference type="InterPro" id="IPR015421">
    <property type="entry name" value="PyrdxlP-dep_Trfase_major"/>
</dbReference>
<dbReference type="InterPro" id="IPR015422">
    <property type="entry name" value="PyrdxlP-dep_Trfase_small"/>
</dbReference>
<dbReference type="NCBIfam" id="TIGR00707">
    <property type="entry name" value="argD"/>
    <property type="match status" value="1"/>
</dbReference>
<dbReference type="NCBIfam" id="NF002325">
    <property type="entry name" value="PRK01278.1"/>
    <property type="match status" value="1"/>
</dbReference>
<dbReference type="NCBIfam" id="NF002797">
    <property type="entry name" value="PRK02936.1"/>
    <property type="match status" value="1"/>
</dbReference>
<dbReference type="NCBIfam" id="NF003273">
    <property type="entry name" value="PRK04260.1"/>
    <property type="match status" value="1"/>
</dbReference>
<dbReference type="PANTHER" id="PTHR11986:SF79">
    <property type="entry name" value="ACETYLORNITHINE AMINOTRANSFERASE, MITOCHONDRIAL"/>
    <property type="match status" value="1"/>
</dbReference>
<dbReference type="PANTHER" id="PTHR11986">
    <property type="entry name" value="AMINOTRANSFERASE CLASS III"/>
    <property type="match status" value="1"/>
</dbReference>
<dbReference type="Pfam" id="PF00202">
    <property type="entry name" value="Aminotran_3"/>
    <property type="match status" value="1"/>
</dbReference>
<dbReference type="PIRSF" id="PIRSF000521">
    <property type="entry name" value="Transaminase_4ab_Lys_Orn"/>
    <property type="match status" value="1"/>
</dbReference>
<dbReference type="SUPFAM" id="SSF53383">
    <property type="entry name" value="PLP-dependent transferases"/>
    <property type="match status" value="1"/>
</dbReference>
<dbReference type="PROSITE" id="PS00600">
    <property type="entry name" value="AA_TRANSFER_CLASS_3"/>
    <property type="match status" value="1"/>
</dbReference>
<gene>
    <name evidence="1" type="primary">argD</name>
    <name type="ordered locus">SMU_666</name>
</gene>
<protein>
    <recommendedName>
        <fullName evidence="1">Acetylornithine aminotransferase</fullName>
        <shortName evidence="1">ACOAT</shortName>
        <ecNumber evidence="1">2.6.1.11</ecNumber>
    </recommendedName>
</protein>
<accession>Q59928</accession>
<comment type="catalytic activity">
    <reaction evidence="1">
        <text>N(2)-acetyl-L-ornithine + 2-oxoglutarate = N-acetyl-L-glutamate 5-semialdehyde + L-glutamate</text>
        <dbReference type="Rhea" id="RHEA:18049"/>
        <dbReference type="ChEBI" id="CHEBI:16810"/>
        <dbReference type="ChEBI" id="CHEBI:29123"/>
        <dbReference type="ChEBI" id="CHEBI:29985"/>
        <dbReference type="ChEBI" id="CHEBI:57805"/>
        <dbReference type="EC" id="2.6.1.11"/>
    </reaction>
</comment>
<comment type="cofactor">
    <cofactor evidence="1">
        <name>pyridoxal 5'-phosphate</name>
        <dbReference type="ChEBI" id="CHEBI:597326"/>
    </cofactor>
    <text evidence="1">Binds 1 pyridoxal phosphate per subunit.</text>
</comment>
<comment type="pathway">
    <text evidence="1">Amino-acid biosynthesis; L-arginine biosynthesis; N(2)-acetyl-L-ornithine from L-glutamate: step 4/4.</text>
</comment>
<comment type="subunit">
    <text evidence="1">Homodimer.</text>
</comment>
<comment type="subcellular location">
    <subcellularLocation>
        <location evidence="1">Cytoplasm</location>
    </subcellularLocation>
</comment>
<comment type="miscellaneous">
    <text evidence="1">May also have succinyldiaminopimelate aminotransferase activity, thus carrying out the corresponding step in lysine biosynthesis.</text>
</comment>
<comment type="similarity">
    <text evidence="1">Belongs to the class-III pyridoxal-phosphate-dependent aminotransferase family. ArgD subfamily.</text>
</comment>
<name>ARGD_STRMU</name>
<evidence type="ECO:0000255" key="1">
    <source>
        <dbReference type="HAMAP-Rule" id="MF_01107"/>
    </source>
</evidence>
<evidence type="ECO:0000305" key="2"/>
<reference key="1">
    <citation type="journal article" date="2002" name="Proc. Natl. Acad. Sci. U.S.A.">
        <title>Genome sequence of Streptococcus mutans UA159, a cariogenic dental pathogen.</title>
        <authorList>
            <person name="Ajdic D.J."/>
            <person name="McShan W.M."/>
            <person name="McLaughlin R.E."/>
            <person name="Savic G."/>
            <person name="Chang J."/>
            <person name="Carson M.B."/>
            <person name="Primeaux C."/>
            <person name="Tian R."/>
            <person name="Kenton S."/>
            <person name="Jia H.G."/>
            <person name="Lin S.P."/>
            <person name="Qian Y."/>
            <person name="Li S."/>
            <person name="Zhu H."/>
            <person name="Najar F.Z."/>
            <person name="Lai H."/>
            <person name="White J."/>
            <person name="Roe B.A."/>
            <person name="Ferretti J.J."/>
        </authorList>
    </citation>
    <scope>NUCLEOTIDE SEQUENCE [LARGE SCALE GENOMIC DNA]</scope>
    <source>
        <strain>ATCC 700610 / UA159</strain>
    </source>
</reference>
<reference key="2">
    <citation type="journal article" date="1996" name="J. Bacteriol.">
        <title>Insertional mutagenesis and recovery of interrupted genes of Streptococcus mutans by using transposon Tn917: preliminary characterization of mutants displaying acid sensitivity and nutritional requirements.</title>
        <authorList>
            <person name="Gutierrez J.A."/>
            <person name="Crowley P.J."/>
            <person name="Brown D.P."/>
            <person name="Hillman J.D."/>
            <person name="Youngman P."/>
            <person name="Bleiweis A.S."/>
        </authorList>
    </citation>
    <scope>NUCLEOTIDE SEQUENCE [GENOMIC DNA]</scope>
    <source>
        <strain>JH1005</strain>
    </source>
</reference>
<sequence>MSNLFQNYTRADLEFIKAEGNYLFDTQGKKYLDFSTGIGVTNLGFHPQVQVALQKQAEQIWHTPNLYQNSLQEEVAAKLMAGKDYLAFFCNSGAEANEAAIKIARKATGKQEIITFQNSFHGRTFGSMSATGQDKIKVGFGDAVPHFHYAVFNDLNSVKALVTENTAAVMLELVQGESGVLPAEQDFVTALADYCQKNGLLLIIDEVQTGMGRTGKLYAFQHYGIEPDIFTLAKGLANGVPVGAMLAKKQFGSAFGPGSHGSTFGGNKLAMAASSAVLDIMTKAGFLEQAWENAHYLQEQLTSALQVADTVTQVRGLGYMIGIETTADLGQLVKATRDRGLIVLTAGTNVIRLLPPLTLTKDEIDQGIMILQEVFEQHN</sequence>
<proteinExistence type="inferred from homology"/>
<keyword id="KW-0028">Amino-acid biosynthesis</keyword>
<keyword id="KW-0032">Aminotransferase</keyword>
<keyword id="KW-0055">Arginine biosynthesis</keyword>
<keyword id="KW-0963">Cytoplasm</keyword>
<keyword id="KW-0663">Pyridoxal phosphate</keyword>
<keyword id="KW-1185">Reference proteome</keyword>
<keyword id="KW-0808">Transferase</keyword>
<feature type="chain" id="PRO_0000112801" description="Acetylornithine aminotransferase">
    <location>
        <begin position="1"/>
        <end position="379"/>
    </location>
</feature>
<feature type="binding site" evidence="1">
    <location>
        <begin position="93"/>
        <end position="94"/>
    </location>
    <ligand>
        <name>pyridoxal 5'-phosphate</name>
        <dbReference type="ChEBI" id="CHEBI:597326"/>
    </ligand>
</feature>
<feature type="binding site" evidence="1">
    <location>
        <position position="120"/>
    </location>
    <ligand>
        <name>pyridoxal 5'-phosphate</name>
        <dbReference type="ChEBI" id="CHEBI:597326"/>
    </ligand>
</feature>
<feature type="binding site" evidence="1">
    <location>
        <position position="123"/>
    </location>
    <ligand>
        <name>N(2)-acetyl-L-ornithine</name>
        <dbReference type="ChEBI" id="CHEBI:57805"/>
    </ligand>
</feature>
<feature type="binding site" evidence="1">
    <location>
        <begin position="205"/>
        <end position="208"/>
    </location>
    <ligand>
        <name>pyridoxal 5'-phosphate</name>
        <dbReference type="ChEBI" id="CHEBI:597326"/>
    </ligand>
</feature>
<feature type="binding site" evidence="1">
    <location>
        <position position="262"/>
    </location>
    <ligand>
        <name>N(2)-acetyl-L-ornithine</name>
        <dbReference type="ChEBI" id="CHEBI:57805"/>
    </ligand>
</feature>
<feature type="binding site" evidence="1">
    <location>
        <position position="263"/>
    </location>
    <ligand>
        <name>pyridoxal 5'-phosphate</name>
        <dbReference type="ChEBI" id="CHEBI:597326"/>
    </ligand>
</feature>
<feature type="modified residue" description="N6-(pyridoxal phosphate)lysine" evidence="1">
    <location>
        <position position="234"/>
    </location>
</feature>
<feature type="sequence conflict" description="In Ref. 2; AAC44504." evidence="2" ref="2">
    <original>H</original>
    <variation>N</variation>
    <location>
        <position position="148"/>
    </location>
</feature>